<reference key="1">
    <citation type="journal article" date="1998" name="Science">
        <title>Complete genome sequence of Treponema pallidum, the syphilis spirochete.</title>
        <authorList>
            <person name="Fraser C.M."/>
            <person name="Norris S.J."/>
            <person name="Weinstock G.M."/>
            <person name="White O."/>
            <person name="Sutton G.G."/>
            <person name="Dodson R.J."/>
            <person name="Gwinn M.L."/>
            <person name="Hickey E.K."/>
            <person name="Clayton R.A."/>
            <person name="Ketchum K.A."/>
            <person name="Sodergren E."/>
            <person name="Hardham J.M."/>
            <person name="McLeod M.P."/>
            <person name="Salzberg S.L."/>
            <person name="Peterson J.D."/>
            <person name="Khalak H.G."/>
            <person name="Richardson D.L."/>
            <person name="Howell J.K."/>
            <person name="Chidambaram M."/>
            <person name="Utterback T.R."/>
            <person name="McDonald L.A."/>
            <person name="Artiach P."/>
            <person name="Bowman C."/>
            <person name="Cotton M.D."/>
            <person name="Fujii C."/>
            <person name="Garland S.A."/>
            <person name="Hatch B."/>
            <person name="Horst K."/>
            <person name="Roberts K.M."/>
            <person name="Sandusky M."/>
            <person name="Weidman J.F."/>
            <person name="Smith H.O."/>
            <person name="Venter J.C."/>
        </authorList>
    </citation>
    <scope>NUCLEOTIDE SEQUENCE [LARGE SCALE GENOMIC DNA]</scope>
    <source>
        <strain>Nichols</strain>
    </source>
</reference>
<protein>
    <recommendedName>
        <fullName evidence="2">tRNA (guanine-N(7)-)-methyltransferase</fullName>
        <ecNumber evidence="2">2.1.1.33</ecNumber>
    </recommendedName>
    <alternativeName>
        <fullName evidence="2">tRNA (guanine(46)-N(7))-methyltransferase</fullName>
    </alternativeName>
    <alternativeName>
        <fullName evidence="2">tRNA(m7G46)-methyltransferase</fullName>
    </alternativeName>
</protein>
<name>TRMB_TREPA</name>
<accession>O83477</accession>
<dbReference type="EC" id="2.1.1.33" evidence="2"/>
<dbReference type="EMBL" id="AE000520">
    <property type="protein sequence ID" value="AAC65448.1"/>
    <property type="molecule type" value="Genomic_DNA"/>
</dbReference>
<dbReference type="PIR" id="B71321">
    <property type="entry name" value="B71321"/>
</dbReference>
<dbReference type="RefSeq" id="WP_010881913.1">
    <property type="nucleotide sequence ID" value="NC_021490.2"/>
</dbReference>
<dbReference type="SMR" id="O83477"/>
<dbReference type="IntAct" id="O83477">
    <property type="interactions" value="4"/>
</dbReference>
<dbReference type="STRING" id="243276.TP_0464"/>
<dbReference type="EnsemblBacteria" id="AAC65448">
    <property type="protein sequence ID" value="AAC65448"/>
    <property type="gene ID" value="TP_0464"/>
</dbReference>
<dbReference type="GeneID" id="93876233"/>
<dbReference type="KEGG" id="tpa:TP_0464"/>
<dbReference type="KEGG" id="tpw:TPANIC_0464"/>
<dbReference type="eggNOG" id="COG0220">
    <property type="taxonomic scope" value="Bacteria"/>
</dbReference>
<dbReference type="HOGENOM" id="CLU_050910_0_1_12"/>
<dbReference type="OrthoDB" id="9802090at2"/>
<dbReference type="UniPathway" id="UPA00989"/>
<dbReference type="Proteomes" id="UP000000811">
    <property type="component" value="Chromosome"/>
</dbReference>
<dbReference type="GO" id="GO:0043527">
    <property type="term" value="C:tRNA methyltransferase complex"/>
    <property type="evidence" value="ECO:0007669"/>
    <property type="project" value="TreeGrafter"/>
</dbReference>
<dbReference type="GO" id="GO:0008176">
    <property type="term" value="F:tRNA (guanine(46)-N7)-methyltransferase activity"/>
    <property type="evidence" value="ECO:0007669"/>
    <property type="project" value="UniProtKB-UniRule"/>
</dbReference>
<dbReference type="CDD" id="cd02440">
    <property type="entry name" value="AdoMet_MTases"/>
    <property type="match status" value="1"/>
</dbReference>
<dbReference type="Gene3D" id="3.40.50.150">
    <property type="entry name" value="Vaccinia Virus protein VP39"/>
    <property type="match status" value="1"/>
</dbReference>
<dbReference type="HAMAP" id="MF_01057">
    <property type="entry name" value="tRNA_methyltr_TrmB"/>
    <property type="match status" value="1"/>
</dbReference>
<dbReference type="InterPro" id="IPR029063">
    <property type="entry name" value="SAM-dependent_MTases_sf"/>
</dbReference>
<dbReference type="InterPro" id="IPR003358">
    <property type="entry name" value="tRNA_(Gua-N-7)_MeTrfase_Trmb"/>
</dbReference>
<dbReference type="InterPro" id="IPR055361">
    <property type="entry name" value="tRNA_methyltr_TrmB_bact"/>
</dbReference>
<dbReference type="NCBIfam" id="TIGR00091">
    <property type="entry name" value="tRNA (guanosine(46)-N7)-methyltransferase TrmB"/>
    <property type="match status" value="1"/>
</dbReference>
<dbReference type="PANTHER" id="PTHR23417">
    <property type="entry name" value="3-DEOXY-D-MANNO-OCTULOSONIC-ACID TRANSFERASE/TRNA GUANINE-N 7 - -METHYLTRANSFERASE"/>
    <property type="match status" value="1"/>
</dbReference>
<dbReference type="PANTHER" id="PTHR23417:SF14">
    <property type="entry name" value="PENTACOTRIPEPTIDE-REPEAT REGION OF PRORP DOMAIN-CONTAINING PROTEIN"/>
    <property type="match status" value="1"/>
</dbReference>
<dbReference type="Pfam" id="PF02390">
    <property type="entry name" value="Methyltransf_4"/>
    <property type="match status" value="1"/>
</dbReference>
<dbReference type="SUPFAM" id="SSF53335">
    <property type="entry name" value="S-adenosyl-L-methionine-dependent methyltransferases"/>
    <property type="match status" value="1"/>
</dbReference>
<dbReference type="PROSITE" id="PS51625">
    <property type="entry name" value="SAM_MT_TRMB"/>
    <property type="match status" value="1"/>
</dbReference>
<keyword id="KW-0489">Methyltransferase</keyword>
<keyword id="KW-1185">Reference proteome</keyword>
<keyword id="KW-0949">S-adenosyl-L-methionine</keyword>
<keyword id="KW-0808">Transferase</keyword>
<keyword id="KW-0819">tRNA processing</keyword>
<evidence type="ECO:0000250" key="1"/>
<evidence type="ECO:0000255" key="2">
    <source>
        <dbReference type="HAMAP-Rule" id="MF_01057"/>
    </source>
</evidence>
<sequence length="250" mass="28068">MTNDSARMRKVLTFTRRSNRMTACQKRDYQHLASRWIIPYQNTVFDYAAVFCSPAAPSAPAGAFPAPQGKTDAVAPACAPAPLVVEIGFGMGSATAAIAARNPHLSYLGIEVYRAGIGRLLRKIEAERLHNLRIIEHDALDVLRTMIAPQTLAGLHIFFPDPWPKTRHHKRRLLYRPRTDLLARALAPGGYLYAVTDWAEYARRAQEELARTPSLTWAPQGARPWRPATEFERKAQTQGRAIHELFFIKA</sequence>
<comment type="function">
    <text evidence="2">Catalyzes the formation of N(7)-methylguanine at position 46 (m7G46) in tRNA.</text>
</comment>
<comment type="catalytic activity">
    <reaction evidence="2">
        <text>guanosine(46) in tRNA + S-adenosyl-L-methionine = N(7)-methylguanosine(46) in tRNA + S-adenosyl-L-homocysteine</text>
        <dbReference type="Rhea" id="RHEA:42708"/>
        <dbReference type="Rhea" id="RHEA-COMP:10188"/>
        <dbReference type="Rhea" id="RHEA-COMP:10189"/>
        <dbReference type="ChEBI" id="CHEBI:57856"/>
        <dbReference type="ChEBI" id="CHEBI:59789"/>
        <dbReference type="ChEBI" id="CHEBI:74269"/>
        <dbReference type="ChEBI" id="CHEBI:74480"/>
        <dbReference type="EC" id="2.1.1.33"/>
    </reaction>
</comment>
<comment type="pathway">
    <text evidence="2">tRNA modification; N(7)-methylguanine-tRNA biosynthesis.</text>
</comment>
<comment type="similarity">
    <text evidence="2">Belongs to the class I-like SAM-binding methyltransferase superfamily. TrmB family.</text>
</comment>
<gene>
    <name evidence="2" type="primary">trmB</name>
    <name type="ordered locus">TP_0464</name>
</gene>
<proteinExistence type="inferred from homology"/>
<organism>
    <name type="scientific">Treponema pallidum (strain Nichols)</name>
    <dbReference type="NCBI Taxonomy" id="243276"/>
    <lineage>
        <taxon>Bacteria</taxon>
        <taxon>Pseudomonadati</taxon>
        <taxon>Spirochaetota</taxon>
        <taxon>Spirochaetia</taxon>
        <taxon>Spirochaetales</taxon>
        <taxon>Treponemataceae</taxon>
        <taxon>Treponema</taxon>
    </lineage>
</organism>
<feature type="chain" id="PRO_0000171416" description="tRNA (guanine-N(7)-)-methyltransferase">
    <location>
        <begin position="1"/>
        <end position="250"/>
    </location>
</feature>
<feature type="active site" evidence="1">
    <location>
        <position position="161"/>
    </location>
</feature>
<feature type="binding site" evidence="2">
    <location>
        <position position="86"/>
    </location>
    <ligand>
        <name>S-adenosyl-L-methionine</name>
        <dbReference type="ChEBI" id="CHEBI:59789"/>
    </ligand>
</feature>
<feature type="binding site" evidence="2">
    <location>
        <position position="111"/>
    </location>
    <ligand>
        <name>S-adenosyl-L-methionine</name>
        <dbReference type="ChEBI" id="CHEBI:59789"/>
    </ligand>
</feature>
<feature type="binding site" evidence="2">
    <location>
        <position position="138"/>
    </location>
    <ligand>
        <name>S-adenosyl-L-methionine</name>
        <dbReference type="ChEBI" id="CHEBI:59789"/>
    </ligand>
</feature>
<feature type="binding site" evidence="2">
    <location>
        <position position="161"/>
    </location>
    <ligand>
        <name>S-adenosyl-L-methionine</name>
        <dbReference type="ChEBI" id="CHEBI:59789"/>
    </ligand>
</feature>
<feature type="binding site" evidence="2">
    <location>
        <position position="165"/>
    </location>
    <ligand>
        <name>substrate</name>
    </ligand>
</feature>
<feature type="binding site" evidence="2">
    <location>
        <position position="197"/>
    </location>
    <ligand>
        <name>substrate</name>
    </ligand>
</feature>
<feature type="binding site" evidence="2">
    <location>
        <begin position="229"/>
        <end position="232"/>
    </location>
    <ligand>
        <name>substrate</name>
    </ligand>
</feature>